<reference key="1">
    <citation type="journal article" date="2004" name="Proc. Natl. Acad. Sci. U.S.A.">
        <title>Genome sequence of the enterobacterial phytopathogen Erwinia carotovora subsp. atroseptica and characterization of virulence factors.</title>
        <authorList>
            <person name="Bell K.S."/>
            <person name="Sebaihia M."/>
            <person name="Pritchard L."/>
            <person name="Holden M.T.G."/>
            <person name="Hyman L.J."/>
            <person name="Holeva M.C."/>
            <person name="Thomson N.R."/>
            <person name="Bentley S.D."/>
            <person name="Churcher L.J.C."/>
            <person name="Mungall K."/>
            <person name="Atkin R."/>
            <person name="Bason N."/>
            <person name="Brooks K."/>
            <person name="Chillingworth T."/>
            <person name="Clark K."/>
            <person name="Doggett J."/>
            <person name="Fraser A."/>
            <person name="Hance Z."/>
            <person name="Hauser H."/>
            <person name="Jagels K."/>
            <person name="Moule S."/>
            <person name="Norbertczak H."/>
            <person name="Ormond D."/>
            <person name="Price C."/>
            <person name="Quail M.A."/>
            <person name="Sanders M."/>
            <person name="Walker D."/>
            <person name="Whitehead S."/>
            <person name="Salmond G.P.C."/>
            <person name="Birch P.R.J."/>
            <person name="Parkhill J."/>
            <person name="Toth I.K."/>
        </authorList>
    </citation>
    <scope>NUCLEOTIDE SEQUENCE [LARGE SCALE GENOMIC DNA]</scope>
    <source>
        <strain>SCRI 1043 / ATCC BAA-672</strain>
    </source>
</reference>
<name>ACDH_PECAS</name>
<organism>
    <name type="scientific">Pectobacterium atrosepticum (strain SCRI 1043 / ATCC BAA-672)</name>
    <name type="common">Erwinia carotovora subsp. atroseptica</name>
    <dbReference type="NCBI Taxonomy" id="218491"/>
    <lineage>
        <taxon>Bacteria</taxon>
        <taxon>Pseudomonadati</taxon>
        <taxon>Pseudomonadota</taxon>
        <taxon>Gammaproteobacteria</taxon>
        <taxon>Enterobacterales</taxon>
        <taxon>Pectobacteriaceae</taxon>
        <taxon>Pectobacterium</taxon>
    </lineage>
</organism>
<keyword id="KW-0058">Aromatic hydrocarbons catabolism</keyword>
<keyword id="KW-0520">NAD</keyword>
<keyword id="KW-0560">Oxidoreductase</keyword>
<keyword id="KW-1185">Reference proteome</keyword>
<dbReference type="EC" id="1.2.1.10" evidence="1"/>
<dbReference type="EMBL" id="BX950851">
    <property type="protein sequence ID" value="CAG74338.1"/>
    <property type="molecule type" value="Genomic_DNA"/>
</dbReference>
<dbReference type="RefSeq" id="WP_011093012.1">
    <property type="nucleotide sequence ID" value="NC_004547.2"/>
</dbReference>
<dbReference type="SMR" id="Q6D797"/>
<dbReference type="STRING" id="218491.ECA1428"/>
<dbReference type="KEGG" id="eca:ECA1428"/>
<dbReference type="PATRIC" id="fig|218491.5.peg.1464"/>
<dbReference type="eggNOG" id="COG4569">
    <property type="taxonomic scope" value="Bacteria"/>
</dbReference>
<dbReference type="HOGENOM" id="CLU_062208_0_0_6"/>
<dbReference type="OrthoDB" id="9786743at2"/>
<dbReference type="UniPathway" id="UPA00714"/>
<dbReference type="Proteomes" id="UP000007966">
    <property type="component" value="Chromosome"/>
</dbReference>
<dbReference type="GO" id="GO:0008774">
    <property type="term" value="F:acetaldehyde dehydrogenase (acetylating) activity"/>
    <property type="evidence" value="ECO:0007669"/>
    <property type="project" value="UniProtKB-UniRule"/>
</dbReference>
<dbReference type="GO" id="GO:0051287">
    <property type="term" value="F:NAD binding"/>
    <property type="evidence" value="ECO:0007669"/>
    <property type="project" value="UniProtKB-UniRule"/>
</dbReference>
<dbReference type="GO" id="GO:0019380">
    <property type="term" value="P:3-phenylpropionate catabolic process"/>
    <property type="evidence" value="ECO:0007669"/>
    <property type="project" value="UniProtKB-UniRule"/>
</dbReference>
<dbReference type="CDD" id="cd23933">
    <property type="entry name" value="ALDH_C"/>
    <property type="match status" value="1"/>
</dbReference>
<dbReference type="Gene3D" id="3.30.360.10">
    <property type="entry name" value="Dihydrodipicolinate Reductase, domain 2"/>
    <property type="match status" value="1"/>
</dbReference>
<dbReference type="Gene3D" id="3.40.50.720">
    <property type="entry name" value="NAD(P)-binding Rossmann-like Domain"/>
    <property type="match status" value="1"/>
</dbReference>
<dbReference type="HAMAP" id="MF_01657">
    <property type="entry name" value="Ac_ald_DH_ac"/>
    <property type="match status" value="1"/>
</dbReference>
<dbReference type="InterPro" id="IPR003361">
    <property type="entry name" value="Acetaldehyde_dehydrogenase"/>
</dbReference>
<dbReference type="InterPro" id="IPR015426">
    <property type="entry name" value="Acetylaldehyde_DH_C"/>
</dbReference>
<dbReference type="InterPro" id="IPR036291">
    <property type="entry name" value="NAD(P)-bd_dom_sf"/>
</dbReference>
<dbReference type="InterPro" id="IPR000534">
    <property type="entry name" value="Semialdehyde_DH_NAD-bd"/>
</dbReference>
<dbReference type="NCBIfam" id="TIGR03215">
    <property type="entry name" value="ac_ald_DH_ac"/>
    <property type="match status" value="1"/>
</dbReference>
<dbReference type="NCBIfam" id="NF006157">
    <property type="entry name" value="PRK08300.1"/>
    <property type="match status" value="1"/>
</dbReference>
<dbReference type="Pfam" id="PF09290">
    <property type="entry name" value="AcetDehyd-dimer"/>
    <property type="match status" value="1"/>
</dbReference>
<dbReference type="Pfam" id="PF01118">
    <property type="entry name" value="Semialdhyde_dh"/>
    <property type="match status" value="1"/>
</dbReference>
<dbReference type="PIRSF" id="PIRSF015689">
    <property type="entry name" value="Actaldh_dh_actl"/>
    <property type="match status" value="1"/>
</dbReference>
<dbReference type="SMART" id="SM00859">
    <property type="entry name" value="Semialdhyde_dh"/>
    <property type="match status" value="1"/>
</dbReference>
<dbReference type="SUPFAM" id="SSF55347">
    <property type="entry name" value="Glyceraldehyde-3-phosphate dehydrogenase-like, C-terminal domain"/>
    <property type="match status" value="1"/>
</dbReference>
<dbReference type="SUPFAM" id="SSF51735">
    <property type="entry name" value="NAD(P)-binding Rossmann-fold domains"/>
    <property type="match status" value="1"/>
</dbReference>
<evidence type="ECO:0000255" key="1">
    <source>
        <dbReference type="HAMAP-Rule" id="MF_01657"/>
    </source>
</evidence>
<comment type="function">
    <text evidence="1">Catalyzes the conversion of acetaldehyde to acetyl-CoA, using NAD(+) and coenzyme A. Is the final enzyme in the meta-cleavage pathway for the degradation of aromatic compounds.</text>
</comment>
<comment type="catalytic activity">
    <reaction evidence="1">
        <text>acetaldehyde + NAD(+) + CoA = acetyl-CoA + NADH + H(+)</text>
        <dbReference type="Rhea" id="RHEA:23288"/>
        <dbReference type="ChEBI" id="CHEBI:15343"/>
        <dbReference type="ChEBI" id="CHEBI:15378"/>
        <dbReference type="ChEBI" id="CHEBI:57287"/>
        <dbReference type="ChEBI" id="CHEBI:57288"/>
        <dbReference type="ChEBI" id="CHEBI:57540"/>
        <dbReference type="ChEBI" id="CHEBI:57945"/>
        <dbReference type="EC" id="1.2.1.10"/>
    </reaction>
</comment>
<comment type="pathway">
    <text evidence="1">Aromatic compound metabolism; 3-phenylpropanoate degradation.</text>
</comment>
<comment type="subunit">
    <text evidence="1">Interacts with MhpE.</text>
</comment>
<comment type="similarity">
    <text evidence="1">Belongs to the acetaldehyde dehydrogenase family.</text>
</comment>
<accession>Q6D797</accession>
<gene>
    <name evidence="1" type="primary">mhpF</name>
    <name type="synonym">nahO</name>
    <name type="ordered locus">ECA1428</name>
</gene>
<feature type="chain" id="PRO_0000387659" description="Acetaldehyde dehydrogenase">
    <location>
        <begin position="1"/>
        <end position="296"/>
    </location>
</feature>
<feature type="active site" description="Acyl-thioester intermediate" evidence="1">
    <location>
        <position position="132"/>
    </location>
</feature>
<feature type="binding site" evidence="1">
    <location>
        <begin position="15"/>
        <end position="18"/>
    </location>
    <ligand>
        <name>NAD(+)</name>
        <dbReference type="ChEBI" id="CHEBI:57540"/>
    </ligand>
</feature>
<feature type="binding site" evidence="1">
    <location>
        <begin position="164"/>
        <end position="172"/>
    </location>
    <ligand>
        <name>NAD(+)</name>
        <dbReference type="ChEBI" id="CHEBI:57540"/>
    </ligand>
</feature>
<feature type="binding site" evidence="1">
    <location>
        <position position="274"/>
    </location>
    <ligand>
        <name>NAD(+)</name>
        <dbReference type="ChEBI" id="CHEBI:57540"/>
    </ligand>
</feature>
<sequence>MTNLNKKVRVGIIGSGNIGTDLLIKTMRSESLTCTIFAGRNFNSAGMKRANELGVHISDRGIQAILDDPSICDVVFDATSAQAHIEHWRELEPLDKTVIDMTPAKVGGFCIPAINAEEILASGNRNINMVTCGGQSSIPIANAISSVHPEFEYIEVASSIASRSAGPATRANLDEYIDTTEKALKQFTGAQRTKAILILNPAVPPIDMQTTIYAKIDRPNIAAIDAAVREMVERLKRYVPGYQLVLPPTLDGNRVVTTVKVMGNGDYLPQYAGNLDIINCAAIAVTEMISSLRYGK</sequence>
<protein>
    <recommendedName>
        <fullName evidence="1">Acetaldehyde dehydrogenase</fullName>
        <ecNumber evidence="1">1.2.1.10</ecNumber>
    </recommendedName>
    <alternativeName>
        <fullName evidence="1">Acetaldehyde dehydrogenase [acetylating]</fullName>
    </alternativeName>
</protein>
<proteinExistence type="inferred from homology"/>